<proteinExistence type="evidence at transcript level"/>
<evidence type="ECO:0000250" key="1"/>
<evidence type="ECO:0000305" key="2"/>
<accession>O49071</accession>
<sequence>MAANVPLSDFLATAVDAAKRAGEVIRKGFYVKKNVEHKGQVDLVTETDKSCEDIIFNCLKQQYPNHKFIGEETTAAYGATELTDEPTWIVDPLDGTTNFVHGFPFVCVSIGLTIGKVPTVGVVYNPIMNELFTGVRRQGAFLNGVPIHVSSKDELVNCLLVTEVGTKRDKSTVDATTNRINGLLFKVRSIRMAGSCALDLCGIACGRADLMYENGYGGAWDVTAGIVIVEEAGGVIFDPSGKDFDITVTRIAASNPLIKDSFVEAFKQAE</sequence>
<gene>
    <name type="primary">IMP1</name>
</gene>
<keyword id="KW-0378">Hydrolase</keyword>
<keyword id="KW-0452">Lithium</keyword>
<keyword id="KW-0460">Magnesium</keyword>
<keyword id="KW-0479">Metal-binding</keyword>
<comment type="function">
    <text>Responsible for the provision of inositol required for synthesis of phosphatidylinositol and polyphosphoinositides.</text>
</comment>
<comment type="catalytic activity">
    <reaction>
        <text>a myo-inositol phosphate + H2O = myo-inositol + phosphate</text>
        <dbReference type="Rhea" id="RHEA:24056"/>
        <dbReference type="ChEBI" id="CHEBI:15377"/>
        <dbReference type="ChEBI" id="CHEBI:17268"/>
        <dbReference type="ChEBI" id="CHEBI:43474"/>
        <dbReference type="ChEBI" id="CHEBI:84139"/>
        <dbReference type="EC" id="3.1.3.25"/>
    </reaction>
</comment>
<comment type="cofactor">
    <cofactor evidence="1">
        <name>Mg(2+)</name>
        <dbReference type="ChEBI" id="CHEBI:18420"/>
    </cofactor>
</comment>
<comment type="activity regulation">
    <text evidence="1">Inhibited by Li(+).</text>
</comment>
<comment type="pathway">
    <text>Polyol metabolism; myo-inositol biosynthesis; myo-inositol from D-glucose 6-phosphate: step 2/2.</text>
</comment>
<comment type="similarity">
    <text evidence="2">Belongs to the inositol monophosphatase superfamily.</text>
</comment>
<protein>
    <recommendedName>
        <fullName>Inositol monophosphatase</fullName>
        <shortName>IMP</shortName>
        <shortName>IMPase</shortName>
        <ecNumber>3.1.3.25</ecNumber>
    </recommendedName>
    <alternativeName>
        <fullName>Inositol-1(or 4)-monophosphatase</fullName>
    </alternativeName>
</protein>
<feature type="chain" id="PRO_0000142526" description="Inositol monophosphatase">
    <location>
        <begin position="1"/>
        <end position="270"/>
    </location>
</feature>
<feature type="binding site" evidence="1">
    <location>
        <position position="71"/>
    </location>
    <ligand>
        <name>Mg(2+)</name>
        <dbReference type="ChEBI" id="CHEBI:18420"/>
        <label>1</label>
    </ligand>
</feature>
<feature type="binding site" evidence="1">
    <location>
        <position position="71"/>
    </location>
    <ligand>
        <name>substrate</name>
    </ligand>
</feature>
<feature type="binding site" evidence="1">
    <location>
        <position position="91"/>
    </location>
    <ligand>
        <name>Mg(2+)</name>
        <dbReference type="ChEBI" id="CHEBI:18420"/>
        <label>1</label>
    </ligand>
</feature>
<feature type="binding site" evidence="1">
    <location>
        <position position="91"/>
    </location>
    <ligand>
        <name>Mg(2+)</name>
        <dbReference type="ChEBI" id="CHEBI:18420"/>
        <label>2</label>
    </ligand>
</feature>
<feature type="binding site" evidence="1">
    <location>
        <begin position="93"/>
        <end position="96"/>
    </location>
    <ligand>
        <name>substrate</name>
    </ligand>
</feature>
<feature type="binding site" evidence="1">
    <location>
        <position position="93"/>
    </location>
    <ligand>
        <name>Mg(2+)</name>
        <dbReference type="ChEBI" id="CHEBI:18420"/>
        <label>1</label>
    </ligand>
</feature>
<feature type="binding site" evidence="1">
    <location>
        <position position="94"/>
    </location>
    <ligand>
        <name>Mg(2+)</name>
        <dbReference type="ChEBI" id="CHEBI:18420"/>
        <label>2</label>
    </ligand>
</feature>
<feature type="binding site" evidence="1">
    <location>
        <begin position="194"/>
        <end position="196"/>
    </location>
    <ligand>
        <name>substrate</name>
    </ligand>
</feature>
<feature type="binding site" evidence="1">
    <location>
        <position position="213"/>
    </location>
    <ligand>
        <name>substrate</name>
    </ligand>
</feature>
<feature type="binding site" evidence="1">
    <location>
        <position position="221"/>
    </location>
    <ligand>
        <name>Mg(2+)</name>
        <dbReference type="ChEBI" id="CHEBI:18420"/>
        <label>2</label>
    </ligand>
</feature>
<feature type="binding site" evidence="1">
    <location>
        <position position="221"/>
    </location>
    <ligand>
        <name>substrate</name>
    </ligand>
</feature>
<dbReference type="EC" id="3.1.3.25"/>
<dbReference type="EMBL" id="AF037220">
    <property type="protein sequence ID" value="AAB92418.1"/>
    <property type="molecule type" value="mRNA"/>
</dbReference>
<dbReference type="PIR" id="T12205">
    <property type="entry name" value="T12205"/>
</dbReference>
<dbReference type="SMR" id="O49071"/>
<dbReference type="UniPathway" id="UPA00823">
    <property type="reaction ID" value="UER00788"/>
</dbReference>
<dbReference type="GO" id="GO:0008934">
    <property type="term" value="F:inositol monophosphate 1-phosphatase activity"/>
    <property type="evidence" value="ECO:0007669"/>
    <property type="project" value="InterPro"/>
</dbReference>
<dbReference type="GO" id="GO:0046872">
    <property type="term" value="F:metal ion binding"/>
    <property type="evidence" value="ECO:0007669"/>
    <property type="project" value="UniProtKB-KW"/>
</dbReference>
<dbReference type="GO" id="GO:0006021">
    <property type="term" value="P:inositol biosynthetic process"/>
    <property type="evidence" value="ECO:0007669"/>
    <property type="project" value="UniProtKB-UniPathway"/>
</dbReference>
<dbReference type="GO" id="GO:0046854">
    <property type="term" value="P:phosphatidylinositol phosphate biosynthetic process"/>
    <property type="evidence" value="ECO:0007669"/>
    <property type="project" value="InterPro"/>
</dbReference>
<dbReference type="GO" id="GO:0007165">
    <property type="term" value="P:signal transduction"/>
    <property type="evidence" value="ECO:0007669"/>
    <property type="project" value="TreeGrafter"/>
</dbReference>
<dbReference type="CDD" id="cd01639">
    <property type="entry name" value="IMPase"/>
    <property type="match status" value="1"/>
</dbReference>
<dbReference type="FunFam" id="3.30.540.10:FF:000004">
    <property type="entry name" value="Inositol-1-monophosphatase"/>
    <property type="match status" value="1"/>
</dbReference>
<dbReference type="FunFam" id="3.40.190.80:FF:000002">
    <property type="entry name" value="Inositol-1-monophosphatase"/>
    <property type="match status" value="1"/>
</dbReference>
<dbReference type="Gene3D" id="3.40.190.80">
    <property type="match status" value="1"/>
</dbReference>
<dbReference type="Gene3D" id="3.30.540.10">
    <property type="entry name" value="Fructose-1,6-Bisphosphatase, subunit A, domain 1"/>
    <property type="match status" value="1"/>
</dbReference>
<dbReference type="InterPro" id="IPR033942">
    <property type="entry name" value="IMPase"/>
</dbReference>
<dbReference type="InterPro" id="IPR020583">
    <property type="entry name" value="Inositol_monoP_metal-BS"/>
</dbReference>
<dbReference type="InterPro" id="IPR020552">
    <property type="entry name" value="Inositol_monoPase_Li-sen"/>
</dbReference>
<dbReference type="InterPro" id="IPR000760">
    <property type="entry name" value="Inositol_monophosphatase-like"/>
</dbReference>
<dbReference type="PANTHER" id="PTHR20854">
    <property type="entry name" value="INOSITOL MONOPHOSPHATASE"/>
    <property type="match status" value="1"/>
</dbReference>
<dbReference type="PANTHER" id="PTHR20854:SF4">
    <property type="entry name" value="INOSITOL-1-MONOPHOSPHATASE-RELATED"/>
    <property type="match status" value="1"/>
</dbReference>
<dbReference type="Pfam" id="PF00459">
    <property type="entry name" value="Inositol_P"/>
    <property type="match status" value="1"/>
</dbReference>
<dbReference type="PRINTS" id="PR00377">
    <property type="entry name" value="IMPHPHTASES"/>
</dbReference>
<dbReference type="PRINTS" id="PR00378">
    <property type="entry name" value="LIIMPHPHTASE"/>
</dbReference>
<dbReference type="SUPFAM" id="SSF56655">
    <property type="entry name" value="Carbohydrate phosphatase"/>
    <property type="match status" value="1"/>
</dbReference>
<dbReference type="PROSITE" id="PS00629">
    <property type="entry name" value="IMP_1"/>
    <property type="match status" value="1"/>
</dbReference>
<organism>
    <name type="scientific">Mesembryanthemum crystallinum</name>
    <name type="common">Common ice plant</name>
    <name type="synonym">Cryophytum crystallinum</name>
    <dbReference type="NCBI Taxonomy" id="3544"/>
    <lineage>
        <taxon>Eukaryota</taxon>
        <taxon>Viridiplantae</taxon>
        <taxon>Streptophyta</taxon>
        <taxon>Embryophyta</taxon>
        <taxon>Tracheophyta</taxon>
        <taxon>Spermatophyta</taxon>
        <taxon>Magnoliopsida</taxon>
        <taxon>eudicotyledons</taxon>
        <taxon>Gunneridae</taxon>
        <taxon>Pentapetalae</taxon>
        <taxon>Caryophyllales</taxon>
        <taxon>Aizoaceae</taxon>
        <taxon>Mesembryanthemum</taxon>
        <taxon>Mesembryanthemum subgen. Cryophytum</taxon>
    </lineage>
</organism>
<reference key="1">
    <citation type="submission" date="1997-12" db="EMBL/GenBank/DDBJ databases">
        <authorList>
            <person name="Nelson D.E."/>
            <person name="Bohnert H.J."/>
        </authorList>
    </citation>
    <scope>NUCLEOTIDE SEQUENCE [MRNA]</scope>
</reference>
<name>IMPP_MESCR</name>